<keyword id="KW-0997">Cell inner membrane</keyword>
<keyword id="KW-1003">Cell membrane</keyword>
<keyword id="KW-0472">Membrane</keyword>
<keyword id="KW-1185">Reference proteome</keyword>
<keyword id="KW-0812">Transmembrane</keyword>
<keyword id="KW-1133">Transmembrane helix</keyword>
<dbReference type="EMBL" id="CR378673">
    <property type="protein sequence ID" value="CAG21666.1"/>
    <property type="molecule type" value="Genomic_DNA"/>
</dbReference>
<dbReference type="RefSeq" id="WP_011219912.1">
    <property type="nucleotide sequence ID" value="NC_006370.1"/>
</dbReference>
<dbReference type="SMR" id="Q6LM12"/>
<dbReference type="STRING" id="298386.PBPRA3381"/>
<dbReference type="KEGG" id="ppr:PBPRA3381"/>
<dbReference type="eggNOG" id="COG3080">
    <property type="taxonomic scope" value="Bacteria"/>
</dbReference>
<dbReference type="HOGENOM" id="CLU_168367_0_0_6"/>
<dbReference type="Proteomes" id="UP000000593">
    <property type="component" value="Chromosome 1"/>
</dbReference>
<dbReference type="GO" id="GO:0045283">
    <property type="term" value="C:fumarate reductase complex"/>
    <property type="evidence" value="ECO:0007669"/>
    <property type="project" value="UniProtKB-UniRule"/>
</dbReference>
<dbReference type="GO" id="GO:0005886">
    <property type="term" value="C:plasma membrane"/>
    <property type="evidence" value="ECO:0007669"/>
    <property type="project" value="UniProtKB-SubCell"/>
</dbReference>
<dbReference type="GO" id="GO:0000104">
    <property type="term" value="F:succinate dehydrogenase activity"/>
    <property type="evidence" value="ECO:0007669"/>
    <property type="project" value="UniProtKB-UniRule"/>
</dbReference>
<dbReference type="GO" id="GO:0006106">
    <property type="term" value="P:fumarate metabolic process"/>
    <property type="evidence" value="ECO:0007669"/>
    <property type="project" value="InterPro"/>
</dbReference>
<dbReference type="CDD" id="cd00547">
    <property type="entry name" value="QFR_TypeD_subunitD"/>
    <property type="match status" value="1"/>
</dbReference>
<dbReference type="Gene3D" id="1.20.1300.10">
    <property type="entry name" value="Fumarate reductase/succinate dehydrogenase, transmembrane subunit"/>
    <property type="match status" value="1"/>
</dbReference>
<dbReference type="HAMAP" id="MF_00709">
    <property type="entry name" value="Fumarate_red_D"/>
    <property type="match status" value="1"/>
</dbReference>
<dbReference type="InterPro" id="IPR003418">
    <property type="entry name" value="Fumarate_red_D"/>
</dbReference>
<dbReference type="InterPro" id="IPR034804">
    <property type="entry name" value="SQR/QFR_C/D"/>
</dbReference>
<dbReference type="NCBIfam" id="NF003977">
    <property type="entry name" value="PRK05470.1-1"/>
    <property type="match status" value="1"/>
</dbReference>
<dbReference type="Pfam" id="PF02313">
    <property type="entry name" value="Fumarate_red_D"/>
    <property type="match status" value="1"/>
</dbReference>
<dbReference type="PIRSF" id="PIRSF000179">
    <property type="entry name" value="FrdD"/>
    <property type="match status" value="1"/>
</dbReference>
<dbReference type="SUPFAM" id="SSF81343">
    <property type="entry name" value="Fumarate reductase respiratory complex transmembrane subunits"/>
    <property type="match status" value="1"/>
</dbReference>
<proteinExistence type="inferred from homology"/>
<gene>
    <name evidence="1" type="primary">frdD</name>
    <name type="ordered locus">PBPRA3381</name>
</gene>
<feature type="chain" id="PRO_1000132406" description="Fumarate reductase subunit D">
    <location>
        <begin position="1"/>
        <end position="120"/>
    </location>
</feature>
<feature type="transmembrane region" description="Helical" evidence="1">
    <location>
        <begin position="25"/>
        <end position="45"/>
    </location>
</feature>
<feature type="transmembrane region" description="Helical" evidence="1">
    <location>
        <begin position="57"/>
        <end position="77"/>
    </location>
</feature>
<feature type="transmembrane region" description="Helical" evidence="1">
    <location>
        <begin position="100"/>
        <end position="120"/>
    </location>
</feature>
<protein>
    <recommendedName>
        <fullName evidence="1">Fumarate reductase subunit D</fullName>
    </recommendedName>
    <alternativeName>
        <fullName evidence="1">Quinol-fumarate reductase subunit D</fullName>
        <shortName evidence="1">QFR subunit D</shortName>
    </alternativeName>
</protein>
<organism>
    <name type="scientific">Photobacterium profundum (strain SS9)</name>
    <dbReference type="NCBI Taxonomy" id="298386"/>
    <lineage>
        <taxon>Bacteria</taxon>
        <taxon>Pseudomonadati</taxon>
        <taxon>Pseudomonadota</taxon>
        <taxon>Gammaproteobacteria</taxon>
        <taxon>Vibrionales</taxon>
        <taxon>Vibrionaceae</taxon>
        <taxon>Photobacterium</taxon>
    </lineage>
</organism>
<evidence type="ECO:0000255" key="1">
    <source>
        <dbReference type="HAMAP-Rule" id="MF_00709"/>
    </source>
</evidence>
<comment type="function">
    <text evidence="1">Anchors the catalytic components of the fumarate reductase complex to the cell membrane, binds quinones.</text>
</comment>
<comment type="subunit">
    <text evidence="1">Part of an enzyme complex containing four subunits: a flavoprotein (FrdA), an iron-sulfur protein (FrdB), and two hydrophobic anchor proteins (FrdC and FrdD).</text>
</comment>
<comment type="subcellular location">
    <subcellularLocation>
        <location evidence="1">Cell inner membrane</location>
        <topology evidence="1">Multi-pass membrane protein</topology>
    </subcellularLocation>
</comment>
<comment type="similarity">
    <text evidence="1">Belongs to the FrdD family.</text>
</comment>
<reference key="1">
    <citation type="journal article" date="2005" name="Science">
        <title>Life at depth: Photobacterium profundum genome sequence and expression analysis.</title>
        <authorList>
            <person name="Vezzi A."/>
            <person name="Campanaro S."/>
            <person name="D'Angelo M."/>
            <person name="Simonato F."/>
            <person name="Vitulo N."/>
            <person name="Lauro F.M."/>
            <person name="Cestaro A."/>
            <person name="Malacrida G."/>
            <person name="Simionati B."/>
            <person name="Cannata N."/>
            <person name="Romualdi C."/>
            <person name="Bartlett D.H."/>
            <person name="Valle G."/>
        </authorList>
    </citation>
    <scope>NUCLEOTIDE SEQUENCE [LARGE SCALE GENOMIC DNA]</scope>
    <source>
        <strain>ATCC BAA-1253 / SS9</strain>
    </source>
</reference>
<accession>Q6LM12</accession>
<name>FRDD_PHOPR</name>
<sequence>MVNLNPKRSDEPVWWGLFGAGGTWFAMLTPVTILVLGIMVPLGILDADAMSYERVSGFVTSFIGALFTIATLALPMWHAMHRLHHGMHDLKFHTGVVGKIACYATAFLVSALAIIFVFMI</sequence>